<protein>
    <recommendedName>
        <fullName>Flowering-promoting factor 1-like protein 1</fullName>
    </recommendedName>
    <alternativeName>
        <fullName>FPF1-like protein 1</fullName>
    </alternativeName>
    <alternativeName>
        <fullName>Protein ROOT ARCHITECTURE ASSOCIATED 1</fullName>
        <shortName>OsRAA1</shortName>
    </alternativeName>
</protein>
<proteinExistence type="evidence at protein level"/>
<gene>
    <name type="primary">RAA1</name>
    <name type="ordered locus">Os01g0257300</name>
    <name type="ordered locus">LOC_Os01g15340</name>
    <name type="ORF">OsJ_01159</name>
    <name type="ORF">P0462H08.5</name>
</gene>
<comment type="function">
    <text evidence="1 2 3 4">GTP-binding protein that functions in the development of root systems, which are mediated by auxin. Acts as a cell cycle regulator during root development. Proteasome-mediated degradation of the protein is necessary for the transition of metaphase to anaphase in mitosis.</text>
</comment>
<comment type="subunit">
    <text evidence="3">Interacts with RPT4.</text>
</comment>
<comment type="interaction">
    <interactant intactId="EBI-6050331">
        <id>Q9LGE3</id>
    </interactant>
    <interactant intactId="EBI-6050314">
        <id>Q9FXT8</id>
        <label>OsRPT4</label>
    </interactant>
    <organismsDiffer>false</organismsDiffer>
    <experiments>6</experiments>
</comment>
<comment type="subcellular location">
    <subcellularLocation>
        <location evidence="3">Cytoplasm</location>
    </subcellularLocation>
    <subcellularLocation>
        <location evidence="3">Nucleus</location>
    </subcellularLocation>
    <text>During mitosis, associates with mitotic spindles.</text>
</comment>
<comment type="tissue specificity">
    <text evidence="1 2">Specifically expressed in the apical meristem, the elongation zone of root tip, steles of the branch zone, and the young lateral root. Also expressed in spikes. Expressed in roots and spikes (at protein level).</text>
</comment>
<comment type="induction">
    <text evidence="1">By auxin.</text>
</comment>
<comment type="domain">
    <text>D-box [RxxLxx(L/I)xN] is the common motif recognized by the E3 ubiquitin ligase APC specifically acting during transition from metaphase to anaphase.</text>
</comment>
<comment type="PTM">
    <text>Ubiquitinated. RPT4 mediates its proteasome-dependent degradation.</text>
</comment>
<comment type="disruption phenotype">
    <text evidence="3">RNAi mutants display reduced seedling height phenotype, because of abnormal cell division.</text>
</comment>
<comment type="miscellaneous">
    <text>Overexpression results in reduced growth of the primary root, an increased number of adventitious roots, a helix primary root and a delayed gravitropic response of roots in seedlings.</text>
</comment>
<comment type="similarity">
    <text evidence="5">Belongs to the FPF1 family.</text>
</comment>
<keyword id="KW-0963">Cytoplasm</keyword>
<keyword id="KW-0342">GTP-binding</keyword>
<keyword id="KW-0547">Nucleotide-binding</keyword>
<keyword id="KW-0539">Nucleus</keyword>
<keyword id="KW-1185">Reference proteome</keyword>
<keyword id="KW-0832">Ubl conjugation</keyword>
<feature type="chain" id="PRO_0000417316" description="Flowering-promoting factor 1-like protein 1">
    <location>
        <begin position="1"/>
        <end position="109"/>
    </location>
</feature>
<feature type="short sequence motif" description="D-box">
    <location>
        <begin position="73"/>
        <end position="81"/>
    </location>
</feature>
<feature type="mutagenesis site" description="Abolishes its proteasome-dependent degradation." evidence="3">
    <original>R</original>
    <variation>G</variation>
    <location>
        <position position="73"/>
    </location>
</feature>
<feature type="mutagenesis site" description="Abolishes its proteasome-dependent degradation." evidence="3">
    <original>L</original>
    <variation>V</variation>
    <location>
        <position position="76"/>
    </location>
</feature>
<feature type="sequence conflict" description="In Ref. 7; AK070626." evidence="5" ref="7">
    <original>S</original>
    <variation>C</variation>
    <location>
        <position position="39"/>
    </location>
</feature>
<reference key="1">
    <citation type="journal article" date="2004" name="Plant Physiol.">
        <title>Overexpression of OsRAA1 causes pleiotropic phenotypes in transgenic rice plants, including altered leaf, flower, and root development and root response to gravity.</title>
        <authorList>
            <person name="Ge L."/>
            <person name="Chen H."/>
            <person name="Jiang J.F."/>
            <person name="Zhao Y."/>
            <person name="Xu M.L."/>
            <person name="Xu Y.Y."/>
            <person name="Tan K.H."/>
            <person name="Xu Z.H."/>
            <person name="Chong K."/>
        </authorList>
    </citation>
    <scope>NUCLEOTIDE SEQUENCE [MRNA]</scope>
    <scope>TISSUE SPECIFICITY</scope>
    <scope>INDUCTION</scope>
    <scope>FUNCTION</scope>
    <source>
        <strain>cv. Nipponbare</strain>
    </source>
</reference>
<reference key="2">
    <citation type="journal article" date="2002" name="Nature">
        <title>The genome sequence and structure of rice chromosome 1.</title>
        <authorList>
            <person name="Sasaki T."/>
            <person name="Matsumoto T."/>
            <person name="Yamamoto K."/>
            <person name="Sakata K."/>
            <person name="Baba T."/>
            <person name="Katayose Y."/>
            <person name="Wu J."/>
            <person name="Niimura Y."/>
            <person name="Cheng Z."/>
            <person name="Nagamura Y."/>
            <person name="Antonio B.A."/>
            <person name="Kanamori H."/>
            <person name="Hosokawa S."/>
            <person name="Masukawa M."/>
            <person name="Arikawa K."/>
            <person name="Chiden Y."/>
            <person name="Hayashi M."/>
            <person name="Okamoto M."/>
            <person name="Ando T."/>
            <person name="Aoki H."/>
            <person name="Arita K."/>
            <person name="Hamada M."/>
            <person name="Harada C."/>
            <person name="Hijishita S."/>
            <person name="Honda M."/>
            <person name="Ichikawa Y."/>
            <person name="Idonuma A."/>
            <person name="Iijima M."/>
            <person name="Ikeda M."/>
            <person name="Ikeno M."/>
            <person name="Ito S."/>
            <person name="Ito T."/>
            <person name="Ito Y."/>
            <person name="Ito Y."/>
            <person name="Iwabuchi A."/>
            <person name="Kamiya K."/>
            <person name="Karasawa W."/>
            <person name="Katagiri S."/>
            <person name="Kikuta A."/>
            <person name="Kobayashi N."/>
            <person name="Kono I."/>
            <person name="Machita K."/>
            <person name="Maehara T."/>
            <person name="Mizuno H."/>
            <person name="Mizubayashi T."/>
            <person name="Mukai Y."/>
            <person name="Nagasaki H."/>
            <person name="Nakashima M."/>
            <person name="Nakama Y."/>
            <person name="Nakamichi Y."/>
            <person name="Nakamura M."/>
            <person name="Namiki N."/>
            <person name="Negishi M."/>
            <person name="Ohta I."/>
            <person name="Ono N."/>
            <person name="Saji S."/>
            <person name="Sakai K."/>
            <person name="Shibata M."/>
            <person name="Shimokawa T."/>
            <person name="Shomura A."/>
            <person name="Song J."/>
            <person name="Takazaki Y."/>
            <person name="Terasawa K."/>
            <person name="Tsuji K."/>
            <person name="Waki K."/>
            <person name="Yamagata H."/>
            <person name="Yamane H."/>
            <person name="Yoshiki S."/>
            <person name="Yoshihara R."/>
            <person name="Yukawa K."/>
            <person name="Zhong H."/>
            <person name="Iwama H."/>
            <person name="Endo T."/>
            <person name="Ito H."/>
            <person name="Hahn J.H."/>
            <person name="Kim H.-I."/>
            <person name="Eun M.-Y."/>
            <person name="Yano M."/>
            <person name="Jiang J."/>
            <person name="Gojobori T."/>
        </authorList>
    </citation>
    <scope>NUCLEOTIDE SEQUENCE [LARGE SCALE GENOMIC DNA]</scope>
    <source>
        <strain>cv. Nipponbare</strain>
    </source>
</reference>
<reference key="3">
    <citation type="journal article" date="2005" name="Nature">
        <title>The map-based sequence of the rice genome.</title>
        <authorList>
            <consortium name="International rice genome sequencing project (IRGSP)"/>
        </authorList>
    </citation>
    <scope>NUCLEOTIDE SEQUENCE [LARGE SCALE GENOMIC DNA]</scope>
    <source>
        <strain>cv. Nipponbare</strain>
    </source>
</reference>
<reference key="4">
    <citation type="journal article" date="2008" name="Nucleic Acids Res.">
        <title>The rice annotation project database (RAP-DB): 2008 update.</title>
        <authorList>
            <consortium name="The rice annotation project (RAP)"/>
        </authorList>
    </citation>
    <scope>GENOME REANNOTATION</scope>
    <source>
        <strain>cv. Nipponbare</strain>
    </source>
</reference>
<reference key="5">
    <citation type="journal article" date="2013" name="Rice">
        <title>Improvement of the Oryza sativa Nipponbare reference genome using next generation sequence and optical map data.</title>
        <authorList>
            <person name="Kawahara Y."/>
            <person name="de la Bastide M."/>
            <person name="Hamilton J.P."/>
            <person name="Kanamori H."/>
            <person name="McCombie W.R."/>
            <person name="Ouyang S."/>
            <person name="Schwartz D.C."/>
            <person name="Tanaka T."/>
            <person name="Wu J."/>
            <person name="Zhou S."/>
            <person name="Childs K.L."/>
            <person name="Davidson R.M."/>
            <person name="Lin H."/>
            <person name="Quesada-Ocampo L."/>
            <person name="Vaillancourt B."/>
            <person name="Sakai H."/>
            <person name="Lee S.S."/>
            <person name="Kim J."/>
            <person name="Numa H."/>
            <person name="Itoh T."/>
            <person name="Buell C.R."/>
            <person name="Matsumoto T."/>
        </authorList>
    </citation>
    <scope>GENOME REANNOTATION</scope>
    <source>
        <strain>cv. Nipponbare</strain>
    </source>
</reference>
<reference key="6">
    <citation type="journal article" date="2005" name="PLoS Biol.">
        <title>The genomes of Oryza sativa: a history of duplications.</title>
        <authorList>
            <person name="Yu J."/>
            <person name="Wang J."/>
            <person name="Lin W."/>
            <person name="Li S."/>
            <person name="Li H."/>
            <person name="Zhou J."/>
            <person name="Ni P."/>
            <person name="Dong W."/>
            <person name="Hu S."/>
            <person name="Zeng C."/>
            <person name="Zhang J."/>
            <person name="Zhang Y."/>
            <person name="Li R."/>
            <person name="Xu Z."/>
            <person name="Li S."/>
            <person name="Li X."/>
            <person name="Zheng H."/>
            <person name="Cong L."/>
            <person name="Lin L."/>
            <person name="Yin J."/>
            <person name="Geng J."/>
            <person name="Li G."/>
            <person name="Shi J."/>
            <person name="Liu J."/>
            <person name="Lv H."/>
            <person name="Li J."/>
            <person name="Wang J."/>
            <person name="Deng Y."/>
            <person name="Ran L."/>
            <person name="Shi X."/>
            <person name="Wang X."/>
            <person name="Wu Q."/>
            <person name="Li C."/>
            <person name="Ren X."/>
            <person name="Wang J."/>
            <person name="Wang X."/>
            <person name="Li D."/>
            <person name="Liu D."/>
            <person name="Zhang X."/>
            <person name="Ji Z."/>
            <person name="Zhao W."/>
            <person name="Sun Y."/>
            <person name="Zhang Z."/>
            <person name="Bao J."/>
            <person name="Han Y."/>
            <person name="Dong L."/>
            <person name="Ji J."/>
            <person name="Chen P."/>
            <person name="Wu S."/>
            <person name="Liu J."/>
            <person name="Xiao Y."/>
            <person name="Bu D."/>
            <person name="Tan J."/>
            <person name="Yang L."/>
            <person name="Ye C."/>
            <person name="Zhang J."/>
            <person name="Xu J."/>
            <person name="Zhou Y."/>
            <person name="Yu Y."/>
            <person name="Zhang B."/>
            <person name="Zhuang S."/>
            <person name="Wei H."/>
            <person name="Liu B."/>
            <person name="Lei M."/>
            <person name="Yu H."/>
            <person name="Li Y."/>
            <person name="Xu H."/>
            <person name="Wei S."/>
            <person name="He X."/>
            <person name="Fang L."/>
            <person name="Zhang Z."/>
            <person name="Zhang Y."/>
            <person name="Huang X."/>
            <person name="Su Z."/>
            <person name="Tong W."/>
            <person name="Li J."/>
            <person name="Tong Z."/>
            <person name="Li S."/>
            <person name="Ye J."/>
            <person name="Wang L."/>
            <person name="Fang L."/>
            <person name="Lei T."/>
            <person name="Chen C.-S."/>
            <person name="Chen H.-C."/>
            <person name="Xu Z."/>
            <person name="Li H."/>
            <person name="Huang H."/>
            <person name="Zhang F."/>
            <person name="Xu H."/>
            <person name="Li N."/>
            <person name="Zhao C."/>
            <person name="Li S."/>
            <person name="Dong L."/>
            <person name="Huang Y."/>
            <person name="Li L."/>
            <person name="Xi Y."/>
            <person name="Qi Q."/>
            <person name="Li W."/>
            <person name="Zhang B."/>
            <person name="Hu W."/>
            <person name="Zhang Y."/>
            <person name="Tian X."/>
            <person name="Jiao Y."/>
            <person name="Liang X."/>
            <person name="Jin J."/>
            <person name="Gao L."/>
            <person name="Zheng W."/>
            <person name="Hao B."/>
            <person name="Liu S.-M."/>
            <person name="Wang W."/>
            <person name="Yuan L."/>
            <person name="Cao M."/>
            <person name="McDermott J."/>
            <person name="Samudrala R."/>
            <person name="Wang J."/>
            <person name="Wong G.K.-S."/>
            <person name="Yang H."/>
        </authorList>
    </citation>
    <scope>NUCLEOTIDE SEQUENCE [LARGE SCALE GENOMIC DNA]</scope>
    <source>
        <strain>cv. Nipponbare</strain>
    </source>
</reference>
<reference key="7">
    <citation type="journal article" date="2003" name="Science">
        <title>Collection, mapping, and annotation of over 28,000 cDNA clones from japonica rice.</title>
        <authorList>
            <consortium name="The rice full-length cDNA consortium"/>
        </authorList>
    </citation>
    <scope>NUCLEOTIDE SEQUENCE [LARGE SCALE MRNA]</scope>
    <source>
        <strain>cv. Nipponbare</strain>
    </source>
</reference>
<reference key="8">
    <citation type="journal article" date="2005" name="J. Plant Physiol.">
        <title>Biochemical character of the purified OsRAA1, a novel rice protein with GTP-binding activity, and its expression pattern in Oryza sativa.</title>
        <authorList>
            <person name="Han Y."/>
            <person name="Wang X."/>
            <person name="Jiang J."/>
            <person name="Xu Y."/>
            <person name="Xu Z."/>
            <person name="Chong K."/>
        </authorList>
    </citation>
    <scope>FUNCTION</scope>
    <scope>GTP-BINDING</scope>
    <scope>TISSUE SPECIFICITY</scope>
</reference>
<reference key="9">
    <citation type="journal article" date="2008" name="Plant Physiol.">
        <title>Rice ROOT ARCHITECTURE ASSOCIATED1 binds the proteasome subunit RPT4 and is degraded in a D-box and proteasome-dependent manner.</title>
        <authorList>
            <person name="Han Y."/>
            <person name="Cao H."/>
            <person name="Jiang J."/>
            <person name="Xu Y."/>
            <person name="Du J."/>
            <person name="Wang X."/>
            <person name="Yuan M."/>
            <person name="Wang Z."/>
            <person name="Xu Z."/>
            <person name="Chong K."/>
        </authorList>
    </citation>
    <scope>FUNCTION</scope>
    <scope>DISRUPTION PHENOTYPE</scope>
    <scope>SUBCELLULAR LOCATION</scope>
    <scope>INTERACTION WITH RPT4</scope>
    <scope>PROTEIN DEGRADATION</scope>
    <scope>MUTAGENESIS OF ARG-73 AND LEU-76</scope>
</reference>
<reference key="10">
    <citation type="journal article" date="2010" name="Plant Signal. Behav.">
        <title>APC-targeted RAA1 degradation mediates the cell cycle and root development in plants.</title>
        <authorList>
            <person name="Xu Y."/>
            <person name="Cao H."/>
            <person name="Chong K."/>
        </authorList>
    </citation>
    <scope>FUNCTION</scope>
    <scope>PROTEIN DEGRADATION</scope>
</reference>
<organism>
    <name type="scientific">Oryza sativa subsp. japonica</name>
    <name type="common">Rice</name>
    <dbReference type="NCBI Taxonomy" id="39947"/>
    <lineage>
        <taxon>Eukaryota</taxon>
        <taxon>Viridiplantae</taxon>
        <taxon>Streptophyta</taxon>
        <taxon>Embryophyta</taxon>
        <taxon>Tracheophyta</taxon>
        <taxon>Spermatophyta</taxon>
        <taxon>Magnoliopsida</taxon>
        <taxon>Liliopsida</taxon>
        <taxon>Poales</taxon>
        <taxon>Poaceae</taxon>
        <taxon>BOP clade</taxon>
        <taxon>Oryzoideae</taxon>
        <taxon>Oryzeae</taxon>
        <taxon>Oryzinae</taxon>
        <taxon>Oryza</taxon>
        <taxon>Oryza sativa</taxon>
    </lineage>
</organism>
<accession>Q9LGE3</accession>
<accession>A0A0P0V0S4</accession>
<evidence type="ECO:0000269" key="1">
    <source>
    </source>
</evidence>
<evidence type="ECO:0000269" key="2">
    <source>
    </source>
</evidence>
<evidence type="ECO:0000269" key="3">
    <source>
    </source>
</evidence>
<evidence type="ECO:0000269" key="4">
    <source>
    </source>
</evidence>
<evidence type="ECO:0000305" key="5"/>
<sequence>MSGVWVFKNGVVRLVEKQQATAGTAVAGGRRKALVHTPSGQVVSSYAALEARLTALGWERYYEDPSLFQFHKRGSLDLISLPADFSAFSSVHMYDIVVKNRDSFRVVDA</sequence>
<name>FLP1_ORYSJ</name>
<dbReference type="EMBL" id="AY659938">
    <property type="protein sequence ID" value="AAT94064.1"/>
    <property type="molecule type" value="mRNA"/>
</dbReference>
<dbReference type="EMBL" id="AP002525">
    <property type="protein sequence ID" value="BAB07982.1"/>
    <property type="molecule type" value="Genomic_DNA"/>
</dbReference>
<dbReference type="EMBL" id="AP008207">
    <property type="protein sequence ID" value="BAF04545.1"/>
    <property type="molecule type" value="Genomic_DNA"/>
</dbReference>
<dbReference type="EMBL" id="AP014957">
    <property type="protein sequence ID" value="BAS71400.1"/>
    <property type="molecule type" value="Genomic_DNA"/>
</dbReference>
<dbReference type="EMBL" id="CM000138">
    <property type="protein sequence ID" value="EAZ11300.1"/>
    <property type="molecule type" value="Genomic_DNA"/>
</dbReference>
<dbReference type="EMBL" id="AK070626">
    <property type="status" value="NOT_ANNOTATED_CDS"/>
    <property type="molecule type" value="mRNA"/>
</dbReference>
<dbReference type="RefSeq" id="XP_015631985.1">
    <property type="nucleotide sequence ID" value="XM_015776499.1"/>
</dbReference>
<dbReference type="SMR" id="Q9LGE3"/>
<dbReference type="FunCoup" id="Q9LGE3">
    <property type="interactions" value="414"/>
</dbReference>
<dbReference type="IntAct" id="Q9LGE3">
    <property type="interactions" value="1"/>
</dbReference>
<dbReference type="STRING" id="39947.Q9LGE3"/>
<dbReference type="PaxDb" id="39947-Q9LGE3"/>
<dbReference type="EnsemblPlants" id="Os01t0257300-01">
    <property type="protein sequence ID" value="Os01t0257300-01"/>
    <property type="gene ID" value="Os01g0257300"/>
</dbReference>
<dbReference type="Gramene" id="Os01t0257300-01">
    <property type="protein sequence ID" value="Os01t0257300-01"/>
    <property type="gene ID" value="Os01g0257300"/>
</dbReference>
<dbReference type="KEGG" id="dosa:Os01g0257300"/>
<dbReference type="eggNOG" id="ENOG502S12G">
    <property type="taxonomic scope" value="Eukaryota"/>
</dbReference>
<dbReference type="HOGENOM" id="CLU_121629_0_1_1"/>
<dbReference type="InParanoid" id="Q9LGE3"/>
<dbReference type="OMA" id="DENPYNQ"/>
<dbReference type="OrthoDB" id="612242at2759"/>
<dbReference type="Proteomes" id="UP000000763">
    <property type="component" value="Chromosome 1"/>
</dbReference>
<dbReference type="Proteomes" id="UP000007752">
    <property type="component" value="Chromosome 1"/>
</dbReference>
<dbReference type="Proteomes" id="UP000059680">
    <property type="component" value="Chromosome 1"/>
</dbReference>
<dbReference type="GO" id="GO:0005737">
    <property type="term" value="C:cytoplasm"/>
    <property type="evidence" value="ECO:0007669"/>
    <property type="project" value="UniProtKB-SubCell"/>
</dbReference>
<dbReference type="GO" id="GO:0005634">
    <property type="term" value="C:nucleus"/>
    <property type="evidence" value="ECO:0007669"/>
    <property type="project" value="UniProtKB-SubCell"/>
</dbReference>
<dbReference type="GO" id="GO:0005525">
    <property type="term" value="F:GTP binding"/>
    <property type="evidence" value="ECO:0000314"/>
    <property type="project" value="UniProtKB"/>
</dbReference>
<dbReference type="GO" id="GO:0045841">
    <property type="term" value="P:negative regulation of mitotic metaphase/anaphase transition"/>
    <property type="evidence" value="ECO:0000314"/>
    <property type="project" value="UniProtKB"/>
</dbReference>
<dbReference type="GO" id="GO:0009909">
    <property type="term" value="P:regulation of flower development"/>
    <property type="evidence" value="ECO:0007669"/>
    <property type="project" value="InterPro"/>
</dbReference>
<dbReference type="GO" id="GO:2000280">
    <property type="term" value="P:regulation of root development"/>
    <property type="evidence" value="ECO:0000315"/>
    <property type="project" value="UniProtKB"/>
</dbReference>
<dbReference type="GO" id="GO:0009733">
    <property type="term" value="P:response to auxin"/>
    <property type="evidence" value="ECO:0000314"/>
    <property type="project" value="UniProtKB"/>
</dbReference>
<dbReference type="InterPro" id="IPR039274">
    <property type="entry name" value="FPF1"/>
</dbReference>
<dbReference type="PANTHER" id="PTHR33433">
    <property type="entry name" value="FLOWERING-PROMOTING FACTOR 1-LIKE PROTEIN 1"/>
    <property type="match status" value="1"/>
</dbReference>